<name>FTSH_CUTAS</name>
<gene>
    <name evidence="1" type="primary">ftsH</name>
    <name type="ordered locus">HMPREF0675_3307</name>
</gene>
<evidence type="ECO:0000255" key="1">
    <source>
        <dbReference type="HAMAP-Rule" id="MF_01458"/>
    </source>
</evidence>
<evidence type="ECO:0000256" key="2">
    <source>
        <dbReference type="SAM" id="MobiDB-lite"/>
    </source>
</evidence>
<proteinExistence type="inferred from homology"/>
<accession>D4HA34</accession>
<sequence>MKNASRIFKGPLIWILLCIGLIIVFLQFAGSGNGYKDIPTSEAVSIINSSKKLDSVTLTDGDQVIKITENENKKYRSYWVGNQSDQLVDRLNDRVKAKTLKSWQGENPGQSIWKALLINFLPFVIILLFFLWAMNAAQGMGGRGGVMGFGKSKAKVGSKDTPKSTFADVAGCQEAIDELQEIREFLAEPAKFQRVGAKIPKGVLLYGPPGTGKTLLARAVAGEAGVPFFSISGSDFVEMFVGVGASRVRDLFEQAKEAAPAIIFIDEIDAVGRHRGAGMGGGHDEREQTLNQLLVEMDGFDVHGGVILIAATNRPDVLDPALLRPGRFDRQIAVEAPDLDGRLKILKVHAHGKPMADDVDLASIARRTPGMTGADLANVLNEAALLTARANLPVIGNSELDEAIDRVIAGPQKKTRLMNQHERLVTAYHEGGHALVAAAMPGTDPVQKITILPRGRALGYTMVMPDSDKYSQTRSELLDSMAYMMGGRAAEELIFHDPSTGASNDIEKATKVARALVTQYGLSARVGTVQLGSGDTEPFLGMTAGQQRDYSDETAKIIDDEVRELLENAHQEAFDCLDANREVLDELVRQLFARETLSKAEVADIFKPLKRWPERGAFTGSDKRVPSSIPPVKPPQIAGVDEDAPEVGAPRRGVIAPPTPEPGGDLPGDNPGEWEPPSDWQPPSVGGGKSPEPPSPTHPGEGPQPPSNGNPWGPPRS</sequence>
<protein>
    <recommendedName>
        <fullName evidence="1">ATP-dependent zinc metalloprotease FtsH</fullName>
        <ecNumber evidence="1">3.4.24.-</ecNumber>
    </recommendedName>
</protein>
<keyword id="KW-0067">ATP-binding</keyword>
<keyword id="KW-1003">Cell membrane</keyword>
<keyword id="KW-0378">Hydrolase</keyword>
<keyword id="KW-0472">Membrane</keyword>
<keyword id="KW-0479">Metal-binding</keyword>
<keyword id="KW-0482">Metalloprotease</keyword>
<keyword id="KW-0547">Nucleotide-binding</keyword>
<keyword id="KW-0645">Protease</keyword>
<keyword id="KW-0812">Transmembrane</keyword>
<keyword id="KW-1133">Transmembrane helix</keyword>
<keyword id="KW-0862">Zinc</keyword>
<comment type="function">
    <text evidence="1">Acts as a processive, ATP-dependent zinc metallopeptidase for both cytoplasmic and membrane proteins. Plays a role in the quality control of integral membrane proteins.</text>
</comment>
<comment type="cofactor">
    <cofactor evidence="1">
        <name>Zn(2+)</name>
        <dbReference type="ChEBI" id="CHEBI:29105"/>
    </cofactor>
    <text evidence="1">Binds 1 zinc ion per subunit.</text>
</comment>
<comment type="subunit">
    <text evidence="1">Homohexamer.</text>
</comment>
<comment type="subcellular location">
    <subcellularLocation>
        <location evidence="1">Cell membrane</location>
        <topology evidence="1">Multi-pass membrane protein</topology>
        <orientation evidence="1">Cytoplasmic side</orientation>
    </subcellularLocation>
</comment>
<comment type="similarity">
    <text evidence="1">In the central section; belongs to the AAA ATPase family.</text>
</comment>
<comment type="similarity">
    <text evidence="1">In the C-terminal section; belongs to the peptidase M41 family.</text>
</comment>
<dbReference type="EC" id="3.4.24.-" evidence="1"/>
<dbReference type="EMBL" id="CP001977">
    <property type="protein sequence ID" value="ADD99933.1"/>
    <property type="molecule type" value="Genomic_DNA"/>
</dbReference>
<dbReference type="RefSeq" id="WP_002548225.1">
    <property type="nucleotide sequence ID" value="NC_014039.1"/>
</dbReference>
<dbReference type="SMR" id="D4HA34"/>
<dbReference type="MEROPS" id="M41.015"/>
<dbReference type="KEGG" id="pak:HMPREF0675_3307"/>
<dbReference type="HOGENOM" id="CLU_000688_16_1_11"/>
<dbReference type="GO" id="GO:0005886">
    <property type="term" value="C:plasma membrane"/>
    <property type="evidence" value="ECO:0007669"/>
    <property type="project" value="UniProtKB-SubCell"/>
</dbReference>
<dbReference type="GO" id="GO:0005524">
    <property type="term" value="F:ATP binding"/>
    <property type="evidence" value="ECO:0007669"/>
    <property type="project" value="UniProtKB-UniRule"/>
</dbReference>
<dbReference type="GO" id="GO:0016887">
    <property type="term" value="F:ATP hydrolysis activity"/>
    <property type="evidence" value="ECO:0007669"/>
    <property type="project" value="UniProtKB-UniRule"/>
</dbReference>
<dbReference type="GO" id="GO:0004176">
    <property type="term" value="F:ATP-dependent peptidase activity"/>
    <property type="evidence" value="ECO:0007669"/>
    <property type="project" value="InterPro"/>
</dbReference>
<dbReference type="GO" id="GO:0004222">
    <property type="term" value="F:metalloendopeptidase activity"/>
    <property type="evidence" value="ECO:0007669"/>
    <property type="project" value="InterPro"/>
</dbReference>
<dbReference type="GO" id="GO:0008270">
    <property type="term" value="F:zinc ion binding"/>
    <property type="evidence" value="ECO:0007669"/>
    <property type="project" value="UniProtKB-UniRule"/>
</dbReference>
<dbReference type="GO" id="GO:0030163">
    <property type="term" value="P:protein catabolic process"/>
    <property type="evidence" value="ECO:0007669"/>
    <property type="project" value="UniProtKB-UniRule"/>
</dbReference>
<dbReference type="GO" id="GO:0006508">
    <property type="term" value="P:proteolysis"/>
    <property type="evidence" value="ECO:0007669"/>
    <property type="project" value="UniProtKB-KW"/>
</dbReference>
<dbReference type="CDD" id="cd19501">
    <property type="entry name" value="RecA-like_FtsH"/>
    <property type="match status" value="1"/>
</dbReference>
<dbReference type="FunFam" id="1.10.8.60:FF:000001">
    <property type="entry name" value="ATP-dependent zinc metalloprotease FtsH"/>
    <property type="match status" value="1"/>
</dbReference>
<dbReference type="FunFam" id="1.20.58.760:FF:000001">
    <property type="entry name" value="ATP-dependent zinc metalloprotease FtsH"/>
    <property type="match status" value="1"/>
</dbReference>
<dbReference type="FunFam" id="3.40.50.300:FF:000001">
    <property type="entry name" value="ATP-dependent zinc metalloprotease FtsH"/>
    <property type="match status" value="1"/>
</dbReference>
<dbReference type="Gene3D" id="1.10.8.60">
    <property type="match status" value="1"/>
</dbReference>
<dbReference type="Gene3D" id="3.40.50.300">
    <property type="entry name" value="P-loop containing nucleotide triphosphate hydrolases"/>
    <property type="match status" value="1"/>
</dbReference>
<dbReference type="Gene3D" id="1.20.58.760">
    <property type="entry name" value="Peptidase M41"/>
    <property type="match status" value="1"/>
</dbReference>
<dbReference type="HAMAP" id="MF_01458">
    <property type="entry name" value="FtsH"/>
    <property type="match status" value="1"/>
</dbReference>
<dbReference type="InterPro" id="IPR003593">
    <property type="entry name" value="AAA+_ATPase"/>
</dbReference>
<dbReference type="InterPro" id="IPR041569">
    <property type="entry name" value="AAA_lid_3"/>
</dbReference>
<dbReference type="InterPro" id="IPR003959">
    <property type="entry name" value="ATPase_AAA_core"/>
</dbReference>
<dbReference type="InterPro" id="IPR003960">
    <property type="entry name" value="ATPase_AAA_CS"/>
</dbReference>
<dbReference type="InterPro" id="IPR005936">
    <property type="entry name" value="FtsH"/>
</dbReference>
<dbReference type="InterPro" id="IPR027417">
    <property type="entry name" value="P-loop_NTPase"/>
</dbReference>
<dbReference type="InterPro" id="IPR011546">
    <property type="entry name" value="Pept_M41_FtsH_extracell"/>
</dbReference>
<dbReference type="InterPro" id="IPR000642">
    <property type="entry name" value="Peptidase_M41"/>
</dbReference>
<dbReference type="InterPro" id="IPR037219">
    <property type="entry name" value="Peptidase_M41-like"/>
</dbReference>
<dbReference type="NCBIfam" id="TIGR01241">
    <property type="entry name" value="FtsH_fam"/>
    <property type="match status" value="1"/>
</dbReference>
<dbReference type="PANTHER" id="PTHR23076:SF97">
    <property type="entry name" value="ATP-DEPENDENT ZINC METALLOPROTEASE YME1L1"/>
    <property type="match status" value="1"/>
</dbReference>
<dbReference type="PANTHER" id="PTHR23076">
    <property type="entry name" value="METALLOPROTEASE M41 FTSH"/>
    <property type="match status" value="1"/>
</dbReference>
<dbReference type="Pfam" id="PF00004">
    <property type="entry name" value="AAA"/>
    <property type="match status" value="1"/>
</dbReference>
<dbReference type="Pfam" id="PF17862">
    <property type="entry name" value="AAA_lid_3"/>
    <property type="match status" value="1"/>
</dbReference>
<dbReference type="Pfam" id="PF06480">
    <property type="entry name" value="FtsH_ext"/>
    <property type="match status" value="1"/>
</dbReference>
<dbReference type="Pfam" id="PF01434">
    <property type="entry name" value="Peptidase_M41"/>
    <property type="match status" value="1"/>
</dbReference>
<dbReference type="SMART" id="SM00382">
    <property type="entry name" value="AAA"/>
    <property type="match status" value="1"/>
</dbReference>
<dbReference type="SUPFAM" id="SSF140990">
    <property type="entry name" value="FtsH protease domain-like"/>
    <property type="match status" value="1"/>
</dbReference>
<dbReference type="SUPFAM" id="SSF52540">
    <property type="entry name" value="P-loop containing nucleoside triphosphate hydrolases"/>
    <property type="match status" value="1"/>
</dbReference>
<dbReference type="PROSITE" id="PS00674">
    <property type="entry name" value="AAA"/>
    <property type="match status" value="1"/>
</dbReference>
<feature type="chain" id="PRO_0000400378" description="ATP-dependent zinc metalloprotease FtsH">
    <location>
        <begin position="1"/>
        <end position="717"/>
    </location>
</feature>
<feature type="topological domain" description="Cytoplasmic" evidence="1">
    <location>
        <begin position="1"/>
        <end position="9"/>
    </location>
</feature>
<feature type="transmembrane region" description="Helical" evidence="1">
    <location>
        <begin position="10"/>
        <end position="30"/>
    </location>
</feature>
<feature type="topological domain" description="Extracellular" evidence="1">
    <location>
        <begin position="31"/>
        <end position="111"/>
    </location>
</feature>
<feature type="transmembrane region" description="Helical" evidence="1">
    <location>
        <begin position="112"/>
        <end position="132"/>
    </location>
</feature>
<feature type="topological domain" description="Cytoplasmic" evidence="1">
    <location>
        <begin position="133"/>
        <end position="717"/>
    </location>
</feature>
<feature type="region of interest" description="Disordered" evidence="2">
    <location>
        <begin position="617"/>
        <end position="717"/>
    </location>
</feature>
<feature type="compositionally biased region" description="Pro residues" evidence="2">
    <location>
        <begin position="691"/>
        <end position="717"/>
    </location>
</feature>
<feature type="active site" evidence="1">
    <location>
        <position position="430"/>
    </location>
</feature>
<feature type="binding site" evidence="1">
    <location>
        <begin position="207"/>
        <end position="214"/>
    </location>
    <ligand>
        <name>ATP</name>
        <dbReference type="ChEBI" id="CHEBI:30616"/>
    </ligand>
</feature>
<feature type="binding site" evidence="1">
    <location>
        <position position="429"/>
    </location>
    <ligand>
        <name>Zn(2+)</name>
        <dbReference type="ChEBI" id="CHEBI:29105"/>
        <note>catalytic</note>
    </ligand>
</feature>
<feature type="binding site" evidence="1">
    <location>
        <position position="433"/>
    </location>
    <ligand>
        <name>Zn(2+)</name>
        <dbReference type="ChEBI" id="CHEBI:29105"/>
        <note>catalytic</note>
    </ligand>
</feature>
<feature type="binding site" evidence="1">
    <location>
        <position position="505"/>
    </location>
    <ligand>
        <name>Zn(2+)</name>
        <dbReference type="ChEBI" id="CHEBI:29105"/>
        <note>catalytic</note>
    </ligand>
</feature>
<organism>
    <name type="scientific">Cutibacterium acnes (strain SK137)</name>
    <name type="common">Propionibacterium acnes</name>
    <dbReference type="NCBI Taxonomy" id="553199"/>
    <lineage>
        <taxon>Bacteria</taxon>
        <taxon>Bacillati</taxon>
        <taxon>Actinomycetota</taxon>
        <taxon>Actinomycetes</taxon>
        <taxon>Propionibacteriales</taxon>
        <taxon>Propionibacteriaceae</taxon>
        <taxon>Cutibacterium</taxon>
    </lineage>
</organism>
<reference key="1">
    <citation type="submission" date="2010-03" db="EMBL/GenBank/DDBJ databases">
        <title>The complete genome of Propionibacterium acnes SK137.</title>
        <authorList>
            <person name="Harkins D.M."/>
            <person name="Madupu R."/>
            <person name="Durkin A.S."/>
            <person name="Torralba M."/>
            <person name="Methe B."/>
            <person name="Sutton G.G."/>
            <person name="Nelson K.E."/>
        </authorList>
    </citation>
    <scope>NUCLEOTIDE SEQUENCE [LARGE SCALE GENOMIC DNA]</scope>
    <source>
        <strain>SK137</strain>
    </source>
</reference>